<dbReference type="EMBL" id="AY780259">
    <property type="protein sequence ID" value="AAX21035.1"/>
    <property type="molecule type" value="Genomic_DNA"/>
</dbReference>
<dbReference type="RefSeq" id="YP_636305.1">
    <property type="nucleotide sequence ID" value="NC_008115.1"/>
</dbReference>
<dbReference type="SMR" id="Q49KZ2"/>
<dbReference type="GeneID" id="4108458"/>
<dbReference type="GO" id="GO:0009535">
    <property type="term" value="C:chloroplast thylakoid membrane"/>
    <property type="evidence" value="ECO:0007669"/>
    <property type="project" value="UniProtKB-SubCell"/>
</dbReference>
<dbReference type="GO" id="GO:0045259">
    <property type="term" value="C:proton-transporting ATP synthase complex"/>
    <property type="evidence" value="ECO:0007669"/>
    <property type="project" value="UniProtKB-KW"/>
</dbReference>
<dbReference type="GO" id="GO:0005524">
    <property type="term" value="F:ATP binding"/>
    <property type="evidence" value="ECO:0007669"/>
    <property type="project" value="UniProtKB-UniRule"/>
</dbReference>
<dbReference type="GO" id="GO:0046933">
    <property type="term" value="F:proton-transporting ATP synthase activity, rotational mechanism"/>
    <property type="evidence" value="ECO:0007669"/>
    <property type="project" value="UniProtKB-UniRule"/>
</dbReference>
<dbReference type="CDD" id="cd12152">
    <property type="entry name" value="F1-ATPase_delta"/>
    <property type="match status" value="1"/>
</dbReference>
<dbReference type="FunFam" id="2.60.15.10:FF:000002">
    <property type="entry name" value="ATP synthase epsilon chain, chloroplastic"/>
    <property type="match status" value="1"/>
</dbReference>
<dbReference type="Gene3D" id="6.10.140.480">
    <property type="match status" value="1"/>
</dbReference>
<dbReference type="Gene3D" id="2.60.15.10">
    <property type="entry name" value="F0F1 ATP synthase delta/epsilon subunit, N-terminal"/>
    <property type="match status" value="1"/>
</dbReference>
<dbReference type="HAMAP" id="MF_00530">
    <property type="entry name" value="ATP_synth_epsil_bac"/>
    <property type="match status" value="1"/>
</dbReference>
<dbReference type="InterPro" id="IPR001469">
    <property type="entry name" value="ATP_synth_F1_dsu/esu"/>
</dbReference>
<dbReference type="InterPro" id="IPR020546">
    <property type="entry name" value="ATP_synth_F1_dsu/esu_N"/>
</dbReference>
<dbReference type="InterPro" id="IPR020547">
    <property type="entry name" value="ATP_synth_F1_esu_C"/>
</dbReference>
<dbReference type="InterPro" id="IPR036771">
    <property type="entry name" value="ATPsynth_dsu/esu_N"/>
</dbReference>
<dbReference type="NCBIfam" id="TIGR01216">
    <property type="entry name" value="ATP_synt_epsi"/>
    <property type="match status" value="1"/>
</dbReference>
<dbReference type="PANTHER" id="PTHR13822">
    <property type="entry name" value="ATP SYNTHASE DELTA/EPSILON CHAIN"/>
    <property type="match status" value="1"/>
</dbReference>
<dbReference type="PANTHER" id="PTHR13822:SF10">
    <property type="entry name" value="ATP SYNTHASE EPSILON CHAIN, CHLOROPLASTIC"/>
    <property type="match status" value="1"/>
</dbReference>
<dbReference type="Pfam" id="PF00401">
    <property type="entry name" value="ATP-synt_DE"/>
    <property type="match status" value="1"/>
</dbReference>
<dbReference type="Pfam" id="PF02823">
    <property type="entry name" value="ATP-synt_DE_N"/>
    <property type="match status" value="1"/>
</dbReference>
<dbReference type="SUPFAM" id="SSF51344">
    <property type="entry name" value="Epsilon subunit of F1F0-ATP synthase N-terminal domain"/>
    <property type="match status" value="1"/>
</dbReference>
<sequence>MTLNLCVLTPNRIVWDSEVKEIILSTNTGQIGVLPNHAPIATAVDIGILRIRLNDQWLTMALMGGFARIGNNEITILVNDAEKGSDIDPQEAQETLELAEANLRKAEGKRQTIEANLALRRARTRVEAINAIS</sequence>
<geneLocation type="chloroplast"/>
<keyword id="KW-0066">ATP synthesis</keyword>
<keyword id="KW-0139">CF(1)</keyword>
<keyword id="KW-0150">Chloroplast</keyword>
<keyword id="KW-0375">Hydrogen ion transport</keyword>
<keyword id="KW-0406">Ion transport</keyword>
<keyword id="KW-0472">Membrane</keyword>
<keyword id="KW-0934">Plastid</keyword>
<keyword id="KW-0793">Thylakoid</keyword>
<keyword id="KW-0813">Transport</keyword>
<proteinExistence type="inferred from homology"/>
<gene>
    <name evidence="1" type="primary">atpE</name>
</gene>
<name>ATPE_EUCGG</name>
<accession>Q49KZ2</accession>
<protein>
    <recommendedName>
        <fullName evidence="1">ATP synthase epsilon chain, chloroplastic</fullName>
    </recommendedName>
    <alternativeName>
        <fullName evidence="1">ATP synthase F1 sector epsilon subunit</fullName>
    </alternativeName>
    <alternativeName>
        <fullName evidence="1">F-ATPase epsilon subunit</fullName>
    </alternativeName>
</protein>
<reference key="1">
    <citation type="journal article" date="2005" name="DNA Res.">
        <title>Complete nucleotide sequence of the chloroplast genome from the Tasmanian blue gum, Eucalyptus globulus (Myrtaceae).</title>
        <authorList>
            <person name="Steane D.A."/>
        </authorList>
    </citation>
    <scope>NUCLEOTIDE SEQUENCE [LARGE SCALE GENOMIC DNA]</scope>
</reference>
<evidence type="ECO:0000255" key="1">
    <source>
        <dbReference type="HAMAP-Rule" id="MF_00530"/>
    </source>
</evidence>
<organism>
    <name type="scientific">Eucalyptus globulus subsp. globulus</name>
    <name type="common">Tasmanian blue gum</name>
    <dbReference type="NCBI Taxonomy" id="71271"/>
    <lineage>
        <taxon>Eukaryota</taxon>
        <taxon>Viridiplantae</taxon>
        <taxon>Streptophyta</taxon>
        <taxon>Embryophyta</taxon>
        <taxon>Tracheophyta</taxon>
        <taxon>Spermatophyta</taxon>
        <taxon>Magnoliopsida</taxon>
        <taxon>eudicotyledons</taxon>
        <taxon>Gunneridae</taxon>
        <taxon>Pentapetalae</taxon>
        <taxon>rosids</taxon>
        <taxon>malvids</taxon>
        <taxon>Myrtales</taxon>
        <taxon>Myrtaceae</taxon>
        <taxon>Myrtoideae</taxon>
        <taxon>Eucalypteae</taxon>
        <taxon>Eucalyptus</taxon>
    </lineage>
</organism>
<comment type="function">
    <text evidence="1">Produces ATP from ADP in the presence of a proton gradient across the membrane.</text>
</comment>
<comment type="subunit">
    <text evidence="1">F-type ATPases have 2 components, CF(1) - the catalytic core - and CF(0) - the membrane proton channel. CF(1) has five subunits: alpha(3), beta(3), gamma(1), delta(1), epsilon(1). CF(0) has three main subunits: a, b and c.</text>
</comment>
<comment type="subcellular location">
    <subcellularLocation>
        <location evidence="1">Plastid</location>
        <location evidence="1">Chloroplast thylakoid membrane</location>
        <topology evidence="1">Peripheral membrane protein</topology>
    </subcellularLocation>
</comment>
<comment type="similarity">
    <text evidence="1">Belongs to the ATPase epsilon chain family.</text>
</comment>
<feature type="chain" id="PRO_0000275198" description="ATP synthase epsilon chain, chloroplastic">
    <location>
        <begin position="1"/>
        <end position="133"/>
    </location>
</feature>